<feature type="chain" id="PRO_0000208681" description="Cytochrome c6">
    <location>
        <begin position="1"/>
        <end position="85"/>
    </location>
</feature>
<feature type="binding site" description="covalent">
    <location>
        <position position="14"/>
    </location>
    <ligand>
        <name>heme c</name>
        <dbReference type="ChEBI" id="CHEBI:61717"/>
    </ligand>
</feature>
<feature type="binding site" description="covalent">
    <location>
        <position position="17"/>
    </location>
    <ligand>
        <name>heme c</name>
        <dbReference type="ChEBI" id="CHEBI:61717"/>
    </ligand>
</feature>
<feature type="binding site" description="axial binding residue">
    <location>
        <position position="18"/>
    </location>
    <ligand>
        <name>heme c</name>
        <dbReference type="ChEBI" id="CHEBI:61717"/>
    </ligand>
    <ligandPart>
        <name>Fe</name>
        <dbReference type="ChEBI" id="CHEBI:18248"/>
    </ligandPart>
</feature>
<feature type="binding site" description="axial binding residue">
    <location>
        <position position="58"/>
    </location>
    <ligand>
        <name>heme c</name>
        <dbReference type="ChEBI" id="CHEBI:61717"/>
    </ligand>
    <ligandPart>
        <name>Fe</name>
        <dbReference type="ChEBI" id="CHEBI:18248"/>
    </ligandPart>
</feature>
<sequence>ADLDNGEKVFSANCAACHAGGNNAIMPDKTLKKDVLEANSMNTIDAITYQVQNGKNAMPAFGGRLVDEDIEDAANYVLSQSEKGW</sequence>
<organism>
    <name type="scientific">Pyropia tenera</name>
    <name type="common">Nori</name>
    <name type="synonym">Porphyra tenera</name>
    <dbReference type="NCBI Taxonomy" id="2785"/>
    <lineage>
        <taxon>Eukaryota</taxon>
        <taxon>Rhodophyta</taxon>
        <taxon>Bangiophyceae</taxon>
        <taxon>Bangiales</taxon>
        <taxon>Bangiaceae</taxon>
        <taxon>Pyropia</taxon>
    </lineage>
</organism>
<evidence type="ECO:0000250" key="1"/>
<evidence type="ECO:0000305" key="2"/>
<proteinExistence type="evidence at protein level"/>
<accession>P00111</accession>
<geneLocation type="chloroplast"/>
<protein>
    <recommendedName>
        <fullName>Cytochrome c6</fullName>
    </recommendedName>
    <alternativeName>
        <fullName>Cytochrome c-553</fullName>
    </alternativeName>
    <alternativeName>
        <fullName>Cytochrome c553</fullName>
    </alternativeName>
    <alternativeName>
        <fullName>Soluble cytochrome f</fullName>
    </alternativeName>
</protein>
<reference key="1">
    <citation type="submission" date="1973-08" db="PIR data bank">
        <authorList>
            <person name="Ambler R.P."/>
            <person name="Meyer T.E."/>
            <person name="Bartsch R.G."/>
        </authorList>
    </citation>
    <scope>PROTEIN SEQUENCE</scope>
</reference>
<name>CYC6_PYRTE</name>
<gene>
    <name type="primary">petJ</name>
</gene>
<dbReference type="PIR" id="A00103">
    <property type="entry name" value="CCPR6"/>
</dbReference>
<dbReference type="SMR" id="P00111"/>
<dbReference type="GO" id="GO:0009543">
    <property type="term" value="C:chloroplast thylakoid lumen"/>
    <property type="evidence" value="ECO:0007669"/>
    <property type="project" value="UniProtKB-SubCell"/>
</dbReference>
<dbReference type="GO" id="GO:0009055">
    <property type="term" value="F:electron transfer activity"/>
    <property type="evidence" value="ECO:0007669"/>
    <property type="project" value="UniProtKB-UniRule"/>
</dbReference>
<dbReference type="GO" id="GO:0020037">
    <property type="term" value="F:heme binding"/>
    <property type="evidence" value="ECO:0007669"/>
    <property type="project" value="InterPro"/>
</dbReference>
<dbReference type="GO" id="GO:0005506">
    <property type="term" value="F:iron ion binding"/>
    <property type="evidence" value="ECO:0007669"/>
    <property type="project" value="InterPro"/>
</dbReference>
<dbReference type="GO" id="GO:0015979">
    <property type="term" value="P:photosynthesis"/>
    <property type="evidence" value="ECO:0007669"/>
    <property type="project" value="UniProtKB-UniRule"/>
</dbReference>
<dbReference type="FunFam" id="1.10.760.10:FF:000038">
    <property type="entry name" value="Cytochrome c6"/>
    <property type="match status" value="1"/>
</dbReference>
<dbReference type="Gene3D" id="1.10.760.10">
    <property type="entry name" value="Cytochrome c-like domain"/>
    <property type="match status" value="1"/>
</dbReference>
<dbReference type="HAMAP" id="MF_00594">
    <property type="entry name" value="Cytc_PetJ"/>
    <property type="match status" value="1"/>
</dbReference>
<dbReference type="InterPro" id="IPR009056">
    <property type="entry name" value="Cyt_c-like_dom"/>
</dbReference>
<dbReference type="InterPro" id="IPR036909">
    <property type="entry name" value="Cyt_c-like_dom_sf"/>
</dbReference>
<dbReference type="InterPro" id="IPR023655">
    <property type="entry name" value="Cyt_C6"/>
</dbReference>
<dbReference type="InterPro" id="IPR008168">
    <property type="entry name" value="Cyt_C_IC"/>
</dbReference>
<dbReference type="PANTHER" id="PTHR34688">
    <property type="entry name" value="CYTOCHROME C6, CHLOROPLASTIC"/>
    <property type="match status" value="1"/>
</dbReference>
<dbReference type="PANTHER" id="PTHR34688:SF2">
    <property type="entry name" value="CYTOCHROME C6, CHLOROPLASTIC"/>
    <property type="match status" value="1"/>
</dbReference>
<dbReference type="Pfam" id="PF13442">
    <property type="entry name" value="Cytochrome_CBB3"/>
    <property type="match status" value="1"/>
</dbReference>
<dbReference type="PRINTS" id="PR00605">
    <property type="entry name" value="CYTCHROMECIC"/>
</dbReference>
<dbReference type="SUPFAM" id="SSF46626">
    <property type="entry name" value="Cytochrome c"/>
    <property type="match status" value="1"/>
</dbReference>
<dbReference type="PROSITE" id="PS51007">
    <property type="entry name" value="CYTC"/>
    <property type="match status" value="1"/>
</dbReference>
<comment type="function">
    <text evidence="1">Functions as an electron carrier between membrane-bound cytochrome b6-f and photosystem I in oxygenic photosynthesis.</text>
</comment>
<comment type="subunit">
    <text evidence="1">Monomer.</text>
</comment>
<comment type="subcellular location">
    <subcellularLocation>
        <location evidence="1">Plastid</location>
        <location evidence="1">Chloroplast thylakoid lumen</location>
    </subcellularLocation>
</comment>
<comment type="PTM">
    <text evidence="1">Binds 1 heme c group covalently per subunit.</text>
</comment>
<comment type="similarity">
    <text evidence="2">Belongs to the cytochrome c family. PetJ subfamily.</text>
</comment>
<keyword id="KW-0150">Chloroplast</keyword>
<keyword id="KW-0903">Direct protein sequencing</keyword>
<keyword id="KW-0249">Electron transport</keyword>
<keyword id="KW-0349">Heme</keyword>
<keyword id="KW-0408">Iron</keyword>
<keyword id="KW-0479">Metal-binding</keyword>
<keyword id="KW-0602">Photosynthesis</keyword>
<keyword id="KW-0934">Plastid</keyword>
<keyword id="KW-0793">Thylakoid</keyword>
<keyword id="KW-0813">Transport</keyword>